<feature type="chain" id="PRO_0000341029" description="Ribosome-recycling factor">
    <location>
        <begin position="1"/>
        <end position="186"/>
    </location>
</feature>
<name>RRF_PEDPA</name>
<protein>
    <recommendedName>
        <fullName evidence="1">Ribosome-recycling factor</fullName>
        <shortName evidence="1">RRF</shortName>
    </recommendedName>
    <alternativeName>
        <fullName evidence="1">Ribosome-releasing factor</fullName>
    </alternativeName>
</protein>
<proteinExistence type="inferred from homology"/>
<keyword id="KW-0963">Cytoplasm</keyword>
<keyword id="KW-0648">Protein biosynthesis</keyword>
<accession>Q03FT3</accession>
<sequence length="186" mass="20630">MAKNEIIQKAEEKMQKAQNVLERDLGSIRAGRANASLLDKVSVDYYGAPTPLNQMASITIPEPRVLLVTPYDKSVLNDIEQAILMSDLGINPANDGSAIRLVVPQLTEETRKDLAKNVKAEGEKAKVAVRNIRRDAMDTLKKANKNGDYNDDEFHDLEKQTQDSTDKAIKVVDEIVANKEKEVLEG</sequence>
<organism>
    <name type="scientific">Pediococcus pentosaceus (strain ATCC 25745 / CCUG 21536 / LMG 10740 / 183-1w)</name>
    <dbReference type="NCBI Taxonomy" id="278197"/>
    <lineage>
        <taxon>Bacteria</taxon>
        <taxon>Bacillati</taxon>
        <taxon>Bacillota</taxon>
        <taxon>Bacilli</taxon>
        <taxon>Lactobacillales</taxon>
        <taxon>Lactobacillaceae</taxon>
        <taxon>Pediococcus</taxon>
    </lineage>
</organism>
<gene>
    <name evidence="1" type="primary">frr</name>
    <name type="ordered locus">PEPE_0880</name>
</gene>
<reference key="1">
    <citation type="journal article" date="2006" name="Proc. Natl. Acad. Sci. U.S.A.">
        <title>Comparative genomics of the lactic acid bacteria.</title>
        <authorList>
            <person name="Makarova K.S."/>
            <person name="Slesarev A."/>
            <person name="Wolf Y.I."/>
            <person name="Sorokin A."/>
            <person name="Mirkin B."/>
            <person name="Koonin E.V."/>
            <person name="Pavlov A."/>
            <person name="Pavlova N."/>
            <person name="Karamychev V."/>
            <person name="Polouchine N."/>
            <person name="Shakhova V."/>
            <person name="Grigoriev I."/>
            <person name="Lou Y."/>
            <person name="Rohksar D."/>
            <person name="Lucas S."/>
            <person name="Huang K."/>
            <person name="Goodstein D.M."/>
            <person name="Hawkins T."/>
            <person name="Plengvidhya V."/>
            <person name="Welker D."/>
            <person name="Hughes J."/>
            <person name="Goh Y."/>
            <person name="Benson A."/>
            <person name="Baldwin K."/>
            <person name="Lee J.-H."/>
            <person name="Diaz-Muniz I."/>
            <person name="Dosti B."/>
            <person name="Smeianov V."/>
            <person name="Wechter W."/>
            <person name="Barabote R."/>
            <person name="Lorca G."/>
            <person name="Altermann E."/>
            <person name="Barrangou R."/>
            <person name="Ganesan B."/>
            <person name="Xie Y."/>
            <person name="Rawsthorne H."/>
            <person name="Tamir D."/>
            <person name="Parker C."/>
            <person name="Breidt F."/>
            <person name="Broadbent J.R."/>
            <person name="Hutkins R."/>
            <person name="O'Sullivan D."/>
            <person name="Steele J."/>
            <person name="Unlu G."/>
            <person name="Saier M.H. Jr."/>
            <person name="Klaenhammer T."/>
            <person name="Richardson P."/>
            <person name="Kozyavkin S."/>
            <person name="Weimer B.C."/>
            <person name="Mills D.A."/>
        </authorList>
    </citation>
    <scope>NUCLEOTIDE SEQUENCE [LARGE SCALE GENOMIC DNA]</scope>
    <source>
        <strain>ATCC 25745 / CCUG 21536 / LMG 10740 / 183-1w</strain>
    </source>
</reference>
<evidence type="ECO:0000255" key="1">
    <source>
        <dbReference type="HAMAP-Rule" id="MF_00040"/>
    </source>
</evidence>
<dbReference type="EMBL" id="CP000422">
    <property type="protein sequence ID" value="ABJ67939.1"/>
    <property type="molecule type" value="Genomic_DNA"/>
</dbReference>
<dbReference type="RefSeq" id="WP_002833608.1">
    <property type="nucleotide sequence ID" value="NC_008525.1"/>
</dbReference>
<dbReference type="SMR" id="Q03FT3"/>
<dbReference type="STRING" id="278197.PEPE_0880"/>
<dbReference type="GeneID" id="33062031"/>
<dbReference type="KEGG" id="ppe:PEPE_0880"/>
<dbReference type="eggNOG" id="COG0233">
    <property type="taxonomic scope" value="Bacteria"/>
</dbReference>
<dbReference type="HOGENOM" id="CLU_073981_2_0_9"/>
<dbReference type="OrthoDB" id="9804006at2"/>
<dbReference type="Proteomes" id="UP000000773">
    <property type="component" value="Chromosome"/>
</dbReference>
<dbReference type="GO" id="GO:0005737">
    <property type="term" value="C:cytoplasm"/>
    <property type="evidence" value="ECO:0007669"/>
    <property type="project" value="UniProtKB-SubCell"/>
</dbReference>
<dbReference type="GO" id="GO:0043023">
    <property type="term" value="F:ribosomal large subunit binding"/>
    <property type="evidence" value="ECO:0007669"/>
    <property type="project" value="TreeGrafter"/>
</dbReference>
<dbReference type="GO" id="GO:0006415">
    <property type="term" value="P:translational termination"/>
    <property type="evidence" value="ECO:0007669"/>
    <property type="project" value="UniProtKB-UniRule"/>
</dbReference>
<dbReference type="CDD" id="cd00520">
    <property type="entry name" value="RRF"/>
    <property type="match status" value="1"/>
</dbReference>
<dbReference type="FunFam" id="1.10.132.20:FF:000001">
    <property type="entry name" value="Ribosome-recycling factor"/>
    <property type="match status" value="1"/>
</dbReference>
<dbReference type="FunFam" id="3.30.1360.40:FF:000001">
    <property type="entry name" value="Ribosome-recycling factor"/>
    <property type="match status" value="1"/>
</dbReference>
<dbReference type="Gene3D" id="3.30.1360.40">
    <property type="match status" value="1"/>
</dbReference>
<dbReference type="Gene3D" id="1.10.132.20">
    <property type="entry name" value="Ribosome-recycling factor"/>
    <property type="match status" value="1"/>
</dbReference>
<dbReference type="HAMAP" id="MF_00040">
    <property type="entry name" value="RRF"/>
    <property type="match status" value="1"/>
</dbReference>
<dbReference type="InterPro" id="IPR002661">
    <property type="entry name" value="Ribosome_recyc_fac"/>
</dbReference>
<dbReference type="InterPro" id="IPR023584">
    <property type="entry name" value="Ribosome_recyc_fac_dom"/>
</dbReference>
<dbReference type="InterPro" id="IPR036191">
    <property type="entry name" value="RRF_sf"/>
</dbReference>
<dbReference type="NCBIfam" id="TIGR00496">
    <property type="entry name" value="frr"/>
    <property type="match status" value="1"/>
</dbReference>
<dbReference type="PANTHER" id="PTHR20982:SF3">
    <property type="entry name" value="MITOCHONDRIAL RIBOSOME RECYCLING FACTOR PSEUDO 1"/>
    <property type="match status" value="1"/>
</dbReference>
<dbReference type="PANTHER" id="PTHR20982">
    <property type="entry name" value="RIBOSOME RECYCLING FACTOR"/>
    <property type="match status" value="1"/>
</dbReference>
<dbReference type="Pfam" id="PF01765">
    <property type="entry name" value="RRF"/>
    <property type="match status" value="1"/>
</dbReference>
<dbReference type="SUPFAM" id="SSF55194">
    <property type="entry name" value="Ribosome recycling factor, RRF"/>
    <property type="match status" value="1"/>
</dbReference>
<comment type="function">
    <text evidence="1">Responsible for the release of ribosomes from messenger RNA at the termination of protein biosynthesis. May increase the efficiency of translation by recycling ribosomes from one round of translation to another.</text>
</comment>
<comment type="subcellular location">
    <subcellularLocation>
        <location evidence="1">Cytoplasm</location>
    </subcellularLocation>
</comment>
<comment type="similarity">
    <text evidence="1">Belongs to the RRF family.</text>
</comment>